<feature type="chain" id="PRO_1000060997" description="Small ribosomal subunit protein uS19">
    <location>
        <begin position="1"/>
        <end position="92"/>
    </location>
</feature>
<protein>
    <recommendedName>
        <fullName evidence="1">Small ribosomal subunit protein uS19</fullName>
    </recommendedName>
    <alternativeName>
        <fullName evidence="2">30S ribosomal protein S19</fullName>
    </alternativeName>
</protein>
<sequence length="92" mass="10430">MPRSLKKGPFIDLHLLKKVEKAVESGDKKPIRTWSRRSTVFPNMIGLTIAVHNGRQHVPVFVSDEMVGHKLGEFAPTRTYRGHAADKKAKKR</sequence>
<proteinExistence type="inferred from homology"/>
<name>RS19_YERP3</name>
<keyword id="KW-0687">Ribonucleoprotein</keyword>
<keyword id="KW-0689">Ribosomal protein</keyword>
<keyword id="KW-0694">RNA-binding</keyword>
<keyword id="KW-0699">rRNA-binding</keyword>
<reference key="1">
    <citation type="journal article" date="2007" name="PLoS Genet.">
        <title>The complete genome sequence of Yersinia pseudotuberculosis IP31758, the causative agent of Far East scarlet-like fever.</title>
        <authorList>
            <person name="Eppinger M."/>
            <person name="Rosovitz M.J."/>
            <person name="Fricke W.F."/>
            <person name="Rasko D.A."/>
            <person name="Kokorina G."/>
            <person name="Fayolle C."/>
            <person name="Lindler L.E."/>
            <person name="Carniel E."/>
            <person name="Ravel J."/>
        </authorList>
    </citation>
    <scope>NUCLEOTIDE SEQUENCE [LARGE SCALE GENOMIC DNA]</scope>
    <source>
        <strain>IP 31758</strain>
    </source>
</reference>
<gene>
    <name evidence="1" type="primary">rpsS</name>
    <name type="ordered locus">YpsIP31758_3911</name>
</gene>
<evidence type="ECO:0000255" key="1">
    <source>
        <dbReference type="HAMAP-Rule" id="MF_00531"/>
    </source>
</evidence>
<evidence type="ECO:0000305" key="2"/>
<comment type="function">
    <text evidence="1">Protein S19 forms a complex with S13 that binds strongly to the 16S ribosomal RNA.</text>
</comment>
<comment type="similarity">
    <text evidence="1">Belongs to the universal ribosomal protein uS19 family.</text>
</comment>
<accession>A7FNN1</accession>
<organism>
    <name type="scientific">Yersinia pseudotuberculosis serotype O:1b (strain IP 31758)</name>
    <dbReference type="NCBI Taxonomy" id="349747"/>
    <lineage>
        <taxon>Bacteria</taxon>
        <taxon>Pseudomonadati</taxon>
        <taxon>Pseudomonadota</taxon>
        <taxon>Gammaproteobacteria</taxon>
        <taxon>Enterobacterales</taxon>
        <taxon>Yersiniaceae</taxon>
        <taxon>Yersinia</taxon>
    </lineage>
</organism>
<dbReference type="EMBL" id="CP000720">
    <property type="protein sequence ID" value="ABS49831.1"/>
    <property type="molecule type" value="Genomic_DNA"/>
</dbReference>
<dbReference type="RefSeq" id="WP_002213430.1">
    <property type="nucleotide sequence ID" value="NC_009708.1"/>
</dbReference>
<dbReference type="SMR" id="A7FNN1"/>
<dbReference type="GeneID" id="97454235"/>
<dbReference type="KEGG" id="ypi:YpsIP31758_3911"/>
<dbReference type="HOGENOM" id="CLU_144911_0_1_6"/>
<dbReference type="Proteomes" id="UP000002412">
    <property type="component" value="Chromosome"/>
</dbReference>
<dbReference type="GO" id="GO:0005737">
    <property type="term" value="C:cytoplasm"/>
    <property type="evidence" value="ECO:0007669"/>
    <property type="project" value="UniProtKB-ARBA"/>
</dbReference>
<dbReference type="GO" id="GO:0015935">
    <property type="term" value="C:small ribosomal subunit"/>
    <property type="evidence" value="ECO:0007669"/>
    <property type="project" value="InterPro"/>
</dbReference>
<dbReference type="GO" id="GO:0019843">
    <property type="term" value="F:rRNA binding"/>
    <property type="evidence" value="ECO:0007669"/>
    <property type="project" value="UniProtKB-UniRule"/>
</dbReference>
<dbReference type="GO" id="GO:0003735">
    <property type="term" value="F:structural constituent of ribosome"/>
    <property type="evidence" value="ECO:0007669"/>
    <property type="project" value="InterPro"/>
</dbReference>
<dbReference type="GO" id="GO:0000028">
    <property type="term" value="P:ribosomal small subunit assembly"/>
    <property type="evidence" value="ECO:0007669"/>
    <property type="project" value="TreeGrafter"/>
</dbReference>
<dbReference type="GO" id="GO:0006412">
    <property type="term" value="P:translation"/>
    <property type="evidence" value="ECO:0007669"/>
    <property type="project" value="UniProtKB-UniRule"/>
</dbReference>
<dbReference type="FunFam" id="3.30.860.10:FF:000001">
    <property type="entry name" value="30S ribosomal protein S19"/>
    <property type="match status" value="1"/>
</dbReference>
<dbReference type="Gene3D" id="3.30.860.10">
    <property type="entry name" value="30s Ribosomal Protein S19, Chain A"/>
    <property type="match status" value="1"/>
</dbReference>
<dbReference type="HAMAP" id="MF_00531">
    <property type="entry name" value="Ribosomal_uS19"/>
    <property type="match status" value="1"/>
</dbReference>
<dbReference type="InterPro" id="IPR002222">
    <property type="entry name" value="Ribosomal_uS19"/>
</dbReference>
<dbReference type="InterPro" id="IPR005732">
    <property type="entry name" value="Ribosomal_uS19_bac-type"/>
</dbReference>
<dbReference type="InterPro" id="IPR020934">
    <property type="entry name" value="Ribosomal_uS19_CS"/>
</dbReference>
<dbReference type="InterPro" id="IPR023575">
    <property type="entry name" value="Ribosomal_uS19_SF"/>
</dbReference>
<dbReference type="NCBIfam" id="TIGR01050">
    <property type="entry name" value="rpsS_bact"/>
    <property type="match status" value="1"/>
</dbReference>
<dbReference type="PANTHER" id="PTHR11880">
    <property type="entry name" value="RIBOSOMAL PROTEIN S19P FAMILY MEMBER"/>
    <property type="match status" value="1"/>
</dbReference>
<dbReference type="PANTHER" id="PTHR11880:SF8">
    <property type="entry name" value="SMALL RIBOSOMAL SUBUNIT PROTEIN US19M"/>
    <property type="match status" value="1"/>
</dbReference>
<dbReference type="Pfam" id="PF00203">
    <property type="entry name" value="Ribosomal_S19"/>
    <property type="match status" value="1"/>
</dbReference>
<dbReference type="PIRSF" id="PIRSF002144">
    <property type="entry name" value="Ribosomal_S19"/>
    <property type="match status" value="1"/>
</dbReference>
<dbReference type="PRINTS" id="PR00975">
    <property type="entry name" value="RIBOSOMALS19"/>
</dbReference>
<dbReference type="SUPFAM" id="SSF54570">
    <property type="entry name" value="Ribosomal protein S19"/>
    <property type="match status" value="1"/>
</dbReference>
<dbReference type="PROSITE" id="PS00323">
    <property type="entry name" value="RIBOSOMAL_S19"/>
    <property type="match status" value="1"/>
</dbReference>